<feature type="chain" id="PRO_0000235715" description="Ribonuclease HII">
    <location>
        <begin position="1"/>
        <end position="196"/>
    </location>
</feature>
<feature type="domain" description="RNase H type-2" evidence="2">
    <location>
        <begin position="9"/>
        <end position="196"/>
    </location>
</feature>
<feature type="binding site" evidence="1">
    <location>
        <position position="15"/>
    </location>
    <ligand>
        <name>a divalent metal cation</name>
        <dbReference type="ChEBI" id="CHEBI:60240"/>
    </ligand>
</feature>
<feature type="binding site" evidence="1">
    <location>
        <position position="16"/>
    </location>
    <ligand>
        <name>a divalent metal cation</name>
        <dbReference type="ChEBI" id="CHEBI:60240"/>
    </ligand>
</feature>
<feature type="binding site" evidence="1">
    <location>
        <position position="107"/>
    </location>
    <ligand>
        <name>a divalent metal cation</name>
        <dbReference type="ChEBI" id="CHEBI:60240"/>
    </ligand>
</feature>
<name>RNH2_DECAR</name>
<gene>
    <name evidence="1" type="primary">rnhB</name>
    <name type="ordered locus">Daro_1756</name>
</gene>
<protein>
    <recommendedName>
        <fullName evidence="1">Ribonuclease HII</fullName>
        <shortName evidence="1">RNase HII</shortName>
        <ecNumber evidence="1">3.1.26.4</ecNumber>
    </recommendedName>
</protein>
<keyword id="KW-0963">Cytoplasm</keyword>
<keyword id="KW-0255">Endonuclease</keyword>
<keyword id="KW-0378">Hydrolase</keyword>
<keyword id="KW-0464">Manganese</keyword>
<keyword id="KW-0479">Metal-binding</keyword>
<keyword id="KW-0540">Nuclease</keyword>
<evidence type="ECO:0000255" key="1">
    <source>
        <dbReference type="HAMAP-Rule" id="MF_00052"/>
    </source>
</evidence>
<evidence type="ECO:0000255" key="2">
    <source>
        <dbReference type="PROSITE-ProRule" id="PRU01319"/>
    </source>
</evidence>
<reference key="1">
    <citation type="journal article" date="2009" name="BMC Genomics">
        <title>Metabolic analysis of the soil microbe Dechloromonas aromatica str. RCB: indications of a surprisingly complex life-style and cryptic anaerobic pathways for aromatic degradation.</title>
        <authorList>
            <person name="Salinero K.K."/>
            <person name="Keller K."/>
            <person name="Feil W.S."/>
            <person name="Feil H."/>
            <person name="Trong S."/>
            <person name="Di Bartolo G."/>
            <person name="Lapidus A."/>
        </authorList>
    </citation>
    <scope>NUCLEOTIDE SEQUENCE [LARGE SCALE GENOMIC DNA]</scope>
    <source>
        <strain>RCB</strain>
    </source>
</reference>
<accession>Q47F78</accession>
<sequence>MPELIVPVGLVCGIDEAGRGPLAGPVVAAAVILDPERPIVGLNDSKKLSEKKRDALAEIIRERALAWAVAEATVEEIDRLNILQATMLAMQRAVAALQVKAESALVDGNRCPKLDIPCEAVVKGDGKIASIAAASILAKTVRDAGMLVLHAQYPHYGFDRHMGYPTAAHFAALEAHGASPVHRRSFGPVARQLSLL</sequence>
<dbReference type="EC" id="3.1.26.4" evidence="1"/>
<dbReference type="EMBL" id="CP000089">
    <property type="protein sequence ID" value="AAZ46503.1"/>
    <property type="molecule type" value="Genomic_DNA"/>
</dbReference>
<dbReference type="SMR" id="Q47F78"/>
<dbReference type="STRING" id="159087.Daro_1756"/>
<dbReference type="KEGG" id="dar:Daro_1756"/>
<dbReference type="eggNOG" id="COG0164">
    <property type="taxonomic scope" value="Bacteria"/>
</dbReference>
<dbReference type="HOGENOM" id="CLU_036532_3_2_4"/>
<dbReference type="OrthoDB" id="9803420at2"/>
<dbReference type="GO" id="GO:0005737">
    <property type="term" value="C:cytoplasm"/>
    <property type="evidence" value="ECO:0007669"/>
    <property type="project" value="UniProtKB-SubCell"/>
</dbReference>
<dbReference type="GO" id="GO:0032299">
    <property type="term" value="C:ribonuclease H2 complex"/>
    <property type="evidence" value="ECO:0007669"/>
    <property type="project" value="TreeGrafter"/>
</dbReference>
<dbReference type="GO" id="GO:0030145">
    <property type="term" value="F:manganese ion binding"/>
    <property type="evidence" value="ECO:0007669"/>
    <property type="project" value="UniProtKB-UniRule"/>
</dbReference>
<dbReference type="GO" id="GO:0003723">
    <property type="term" value="F:RNA binding"/>
    <property type="evidence" value="ECO:0007669"/>
    <property type="project" value="InterPro"/>
</dbReference>
<dbReference type="GO" id="GO:0004523">
    <property type="term" value="F:RNA-DNA hybrid ribonuclease activity"/>
    <property type="evidence" value="ECO:0007669"/>
    <property type="project" value="UniProtKB-UniRule"/>
</dbReference>
<dbReference type="GO" id="GO:0043137">
    <property type="term" value="P:DNA replication, removal of RNA primer"/>
    <property type="evidence" value="ECO:0007669"/>
    <property type="project" value="TreeGrafter"/>
</dbReference>
<dbReference type="GO" id="GO:0006298">
    <property type="term" value="P:mismatch repair"/>
    <property type="evidence" value="ECO:0007669"/>
    <property type="project" value="TreeGrafter"/>
</dbReference>
<dbReference type="CDD" id="cd07182">
    <property type="entry name" value="RNase_HII_bacteria_HII_like"/>
    <property type="match status" value="1"/>
</dbReference>
<dbReference type="FunFam" id="3.30.420.10:FF:000006">
    <property type="entry name" value="Ribonuclease HII"/>
    <property type="match status" value="1"/>
</dbReference>
<dbReference type="Gene3D" id="3.30.420.10">
    <property type="entry name" value="Ribonuclease H-like superfamily/Ribonuclease H"/>
    <property type="match status" value="1"/>
</dbReference>
<dbReference type="HAMAP" id="MF_00052_B">
    <property type="entry name" value="RNase_HII_B"/>
    <property type="match status" value="1"/>
</dbReference>
<dbReference type="InterPro" id="IPR022898">
    <property type="entry name" value="RNase_HII"/>
</dbReference>
<dbReference type="InterPro" id="IPR001352">
    <property type="entry name" value="RNase_HII/HIII"/>
</dbReference>
<dbReference type="InterPro" id="IPR024567">
    <property type="entry name" value="RNase_HII/HIII_dom"/>
</dbReference>
<dbReference type="InterPro" id="IPR012337">
    <property type="entry name" value="RNaseH-like_sf"/>
</dbReference>
<dbReference type="InterPro" id="IPR036397">
    <property type="entry name" value="RNaseH_sf"/>
</dbReference>
<dbReference type="NCBIfam" id="NF000594">
    <property type="entry name" value="PRK00015.1-1"/>
    <property type="match status" value="1"/>
</dbReference>
<dbReference type="NCBIfam" id="NF000595">
    <property type="entry name" value="PRK00015.1-3"/>
    <property type="match status" value="1"/>
</dbReference>
<dbReference type="NCBIfam" id="NF000596">
    <property type="entry name" value="PRK00015.1-4"/>
    <property type="match status" value="1"/>
</dbReference>
<dbReference type="PANTHER" id="PTHR10954">
    <property type="entry name" value="RIBONUCLEASE H2 SUBUNIT A"/>
    <property type="match status" value="1"/>
</dbReference>
<dbReference type="PANTHER" id="PTHR10954:SF18">
    <property type="entry name" value="RIBONUCLEASE HII"/>
    <property type="match status" value="1"/>
</dbReference>
<dbReference type="Pfam" id="PF01351">
    <property type="entry name" value="RNase_HII"/>
    <property type="match status" value="1"/>
</dbReference>
<dbReference type="SUPFAM" id="SSF53098">
    <property type="entry name" value="Ribonuclease H-like"/>
    <property type="match status" value="1"/>
</dbReference>
<dbReference type="PROSITE" id="PS51975">
    <property type="entry name" value="RNASE_H_2"/>
    <property type="match status" value="1"/>
</dbReference>
<organism>
    <name type="scientific">Dechloromonas aromatica (strain RCB)</name>
    <dbReference type="NCBI Taxonomy" id="159087"/>
    <lineage>
        <taxon>Bacteria</taxon>
        <taxon>Pseudomonadati</taxon>
        <taxon>Pseudomonadota</taxon>
        <taxon>Betaproteobacteria</taxon>
        <taxon>Rhodocyclales</taxon>
        <taxon>Azonexaceae</taxon>
        <taxon>Dechloromonas</taxon>
    </lineage>
</organism>
<proteinExistence type="inferred from homology"/>
<comment type="function">
    <text evidence="1">Endonuclease that specifically degrades the RNA of RNA-DNA hybrids.</text>
</comment>
<comment type="catalytic activity">
    <reaction evidence="1">
        <text>Endonucleolytic cleavage to 5'-phosphomonoester.</text>
        <dbReference type="EC" id="3.1.26.4"/>
    </reaction>
</comment>
<comment type="cofactor">
    <cofactor evidence="1">
        <name>Mn(2+)</name>
        <dbReference type="ChEBI" id="CHEBI:29035"/>
    </cofactor>
    <cofactor evidence="1">
        <name>Mg(2+)</name>
        <dbReference type="ChEBI" id="CHEBI:18420"/>
    </cofactor>
    <text evidence="1">Manganese or magnesium. Binds 1 divalent metal ion per monomer in the absence of substrate. May bind a second metal ion after substrate binding.</text>
</comment>
<comment type="subcellular location">
    <subcellularLocation>
        <location evidence="1">Cytoplasm</location>
    </subcellularLocation>
</comment>
<comment type="similarity">
    <text evidence="1">Belongs to the RNase HII family.</text>
</comment>